<feature type="chain" id="PRO_0000153450" description="Histidinol-phosphate aminotransferase">
    <location>
        <begin position="1"/>
        <end position="361"/>
    </location>
</feature>
<feature type="modified residue" description="N6-(pyridoxal phosphate)lysine" evidence="1">
    <location>
        <position position="218"/>
    </location>
</feature>
<protein>
    <recommendedName>
        <fullName evidence="1">Histidinol-phosphate aminotransferase</fullName>
        <ecNumber evidence="1">2.6.1.9</ecNumber>
    </recommendedName>
    <alternativeName>
        <fullName evidence="1">Imidazole acetol-phosphate transaminase</fullName>
    </alternativeName>
</protein>
<reference key="1">
    <citation type="journal article" date="2004" name="Nature">
        <title>Genome sequence of Silicibacter pomeroyi reveals adaptations to the marine environment.</title>
        <authorList>
            <person name="Moran M.A."/>
            <person name="Buchan A."/>
            <person name="Gonzalez J.M."/>
            <person name="Heidelberg J.F."/>
            <person name="Whitman W.B."/>
            <person name="Kiene R.P."/>
            <person name="Henriksen J.R."/>
            <person name="King G.M."/>
            <person name="Belas R."/>
            <person name="Fuqua C."/>
            <person name="Brinkac L.M."/>
            <person name="Lewis M."/>
            <person name="Johri S."/>
            <person name="Weaver B."/>
            <person name="Pai G."/>
            <person name="Eisen J.A."/>
            <person name="Rahe E."/>
            <person name="Sheldon W.M."/>
            <person name="Ye W."/>
            <person name="Miller T.R."/>
            <person name="Carlton J."/>
            <person name="Rasko D.A."/>
            <person name="Paulsen I.T."/>
            <person name="Ren Q."/>
            <person name="Daugherty S.C."/>
            <person name="DeBoy R.T."/>
            <person name="Dodson R.J."/>
            <person name="Durkin A.S."/>
            <person name="Madupu R."/>
            <person name="Nelson W.C."/>
            <person name="Sullivan S.A."/>
            <person name="Rosovitz M.J."/>
            <person name="Haft D.H."/>
            <person name="Selengut J."/>
            <person name="Ward N."/>
        </authorList>
    </citation>
    <scope>NUCLEOTIDE SEQUENCE [LARGE SCALE GENOMIC DNA]</scope>
    <source>
        <strain>ATCC 700808 / DSM 15171 / DSS-3</strain>
    </source>
</reference>
<reference key="2">
    <citation type="journal article" date="2014" name="Stand. Genomic Sci.">
        <title>An updated genome annotation for the model marine bacterium Ruegeria pomeroyi DSS-3.</title>
        <authorList>
            <person name="Rivers A.R."/>
            <person name="Smith C.B."/>
            <person name="Moran M.A."/>
        </authorList>
    </citation>
    <scope>GENOME REANNOTATION</scope>
    <source>
        <strain>ATCC 700808 / DSM 15171 / DSS-3</strain>
    </source>
</reference>
<proteinExistence type="inferred from homology"/>
<keyword id="KW-0028">Amino-acid biosynthesis</keyword>
<keyword id="KW-0032">Aminotransferase</keyword>
<keyword id="KW-0368">Histidine biosynthesis</keyword>
<keyword id="KW-0663">Pyridoxal phosphate</keyword>
<keyword id="KW-1185">Reference proteome</keyword>
<keyword id="KW-0808">Transferase</keyword>
<name>HIS8_RUEPO</name>
<organism>
    <name type="scientific">Ruegeria pomeroyi (strain ATCC 700808 / DSM 15171 / DSS-3)</name>
    <name type="common">Silicibacter pomeroyi</name>
    <dbReference type="NCBI Taxonomy" id="246200"/>
    <lineage>
        <taxon>Bacteria</taxon>
        <taxon>Pseudomonadati</taxon>
        <taxon>Pseudomonadota</taxon>
        <taxon>Alphaproteobacteria</taxon>
        <taxon>Rhodobacterales</taxon>
        <taxon>Roseobacteraceae</taxon>
        <taxon>Ruegeria</taxon>
    </lineage>
</organism>
<dbReference type="EC" id="2.6.1.9" evidence="1"/>
<dbReference type="EMBL" id="CP000031">
    <property type="protein sequence ID" value="AAV96412.1"/>
    <property type="status" value="ALT_INIT"/>
    <property type="molecule type" value="Genomic_DNA"/>
</dbReference>
<dbReference type="RefSeq" id="WP_044028681.1">
    <property type="nucleotide sequence ID" value="NC_003911.12"/>
</dbReference>
<dbReference type="SMR" id="Q5LNM6"/>
<dbReference type="STRING" id="246200.SPO3177"/>
<dbReference type="PaxDb" id="246200-SPO3177"/>
<dbReference type="KEGG" id="sil:SPO3177"/>
<dbReference type="eggNOG" id="COG0079">
    <property type="taxonomic scope" value="Bacteria"/>
</dbReference>
<dbReference type="HOGENOM" id="CLU_017584_3_3_5"/>
<dbReference type="OrthoDB" id="9809616at2"/>
<dbReference type="UniPathway" id="UPA00031">
    <property type="reaction ID" value="UER00012"/>
</dbReference>
<dbReference type="Proteomes" id="UP000001023">
    <property type="component" value="Chromosome"/>
</dbReference>
<dbReference type="GO" id="GO:0004400">
    <property type="term" value="F:histidinol-phosphate transaminase activity"/>
    <property type="evidence" value="ECO:0007669"/>
    <property type="project" value="UniProtKB-UniRule"/>
</dbReference>
<dbReference type="GO" id="GO:0030170">
    <property type="term" value="F:pyridoxal phosphate binding"/>
    <property type="evidence" value="ECO:0007669"/>
    <property type="project" value="InterPro"/>
</dbReference>
<dbReference type="GO" id="GO:0000105">
    <property type="term" value="P:L-histidine biosynthetic process"/>
    <property type="evidence" value="ECO:0007669"/>
    <property type="project" value="UniProtKB-UniRule"/>
</dbReference>
<dbReference type="CDD" id="cd00609">
    <property type="entry name" value="AAT_like"/>
    <property type="match status" value="1"/>
</dbReference>
<dbReference type="Gene3D" id="3.90.1150.10">
    <property type="entry name" value="Aspartate Aminotransferase, domain 1"/>
    <property type="match status" value="1"/>
</dbReference>
<dbReference type="Gene3D" id="3.40.640.10">
    <property type="entry name" value="Type I PLP-dependent aspartate aminotransferase-like (Major domain)"/>
    <property type="match status" value="1"/>
</dbReference>
<dbReference type="HAMAP" id="MF_01023">
    <property type="entry name" value="HisC_aminotrans_2"/>
    <property type="match status" value="1"/>
</dbReference>
<dbReference type="InterPro" id="IPR004839">
    <property type="entry name" value="Aminotransferase_I/II_large"/>
</dbReference>
<dbReference type="InterPro" id="IPR005861">
    <property type="entry name" value="HisP_aminotrans"/>
</dbReference>
<dbReference type="InterPro" id="IPR050106">
    <property type="entry name" value="HistidinolP_aminotransfase"/>
</dbReference>
<dbReference type="InterPro" id="IPR015424">
    <property type="entry name" value="PyrdxlP-dep_Trfase"/>
</dbReference>
<dbReference type="InterPro" id="IPR015421">
    <property type="entry name" value="PyrdxlP-dep_Trfase_major"/>
</dbReference>
<dbReference type="InterPro" id="IPR015422">
    <property type="entry name" value="PyrdxlP-dep_Trfase_small"/>
</dbReference>
<dbReference type="NCBIfam" id="TIGR01141">
    <property type="entry name" value="hisC"/>
    <property type="match status" value="1"/>
</dbReference>
<dbReference type="PANTHER" id="PTHR43643:SF3">
    <property type="entry name" value="HISTIDINOL-PHOSPHATE AMINOTRANSFERASE"/>
    <property type="match status" value="1"/>
</dbReference>
<dbReference type="PANTHER" id="PTHR43643">
    <property type="entry name" value="HISTIDINOL-PHOSPHATE AMINOTRANSFERASE 2"/>
    <property type="match status" value="1"/>
</dbReference>
<dbReference type="Pfam" id="PF00155">
    <property type="entry name" value="Aminotran_1_2"/>
    <property type="match status" value="1"/>
</dbReference>
<dbReference type="SUPFAM" id="SSF53383">
    <property type="entry name" value="PLP-dependent transferases"/>
    <property type="match status" value="1"/>
</dbReference>
<accession>Q5LNM6</accession>
<comment type="catalytic activity">
    <reaction evidence="1">
        <text>L-histidinol phosphate + 2-oxoglutarate = 3-(imidazol-4-yl)-2-oxopropyl phosphate + L-glutamate</text>
        <dbReference type="Rhea" id="RHEA:23744"/>
        <dbReference type="ChEBI" id="CHEBI:16810"/>
        <dbReference type="ChEBI" id="CHEBI:29985"/>
        <dbReference type="ChEBI" id="CHEBI:57766"/>
        <dbReference type="ChEBI" id="CHEBI:57980"/>
        <dbReference type="EC" id="2.6.1.9"/>
    </reaction>
</comment>
<comment type="cofactor">
    <cofactor evidence="1">
        <name>pyridoxal 5'-phosphate</name>
        <dbReference type="ChEBI" id="CHEBI:597326"/>
    </cofactor>
</comment>
<comment type="pathway">
    <text evidence="1">Amino-acid biosynthesis; L-histidine biosynthesis; L-histidine from 5-phospho-alpha-D-ribose 1-diphosphate: step 7/9.</text>
</comment>
<comment type="subunit">
    <text evidence="1">Homodimer.</text>
</comment>
<comment type="similarity">
    <text evidence="1">Belongs to the class-II pyridoxal-phosphate-dependent aminotransferase family. Histidinol-phosphate aminotransferase subfamily.</text>
</comment>
<comment type="sequence caution" evidence="2">
    <conflict type="erroneous initiation">
        <sequence resource="EMBL-CDS" id="AAV96412"/>
    </conflict>
</comment>
<gene>
    <name evidence="1" type="primary">hisC</name>
    <name type="ordered locus">SPO3177</name>
</gene>
<sequence length="361" mass="38782">MNQFTPQPGIMDIALYQGGKAHVDGVANVIKLSSNENPLGPSPAAVEAIRATAAQAHRYPSTDHAELRAAIGAVHGLDPDRIICGVGSDEVLQFVAQAYTGPGDEVIHTEHGFSMYPILARMAGATPVQVPERQRVVDVDAILAAVNDRTRLVFLANPANPTGTMISEAEVTRLADGLPGHVLLVLDGAYAEFVEGFDGGAALVSARDNVIMTRTFSKIYGLGGLRIGWGYAPREIIDVLNRIRQPFNLSTMQLAAAEAAVRDQDWVARCRDQNTTWRTWLAARLAELGVPSDVSCANFILARFADQGEAEACDLFLQSRGLIVRRVAGYNLPQALRITVGDEAGCRAVVDAVRAFKEARA</sequence>
<evidence type="ECO:0000255" key="1">
    <source>
        <dbReference type="HAMAP-Rule" id="MF_01023"/>
    </source>
</evidence>
<evidence type="ECO:0000305" key="2"/>